<gene>
    <name evidence="1" type="primary">rpl30</name>
    <name type="synonym">rpl30Ab</name>
    <name type="ordered locus">SSO0697</name>
    <name type="ORF">C10_033</name>
</gene>
<dbReference type="EMBL" id="Y18930">
    <property type="protein sequence ID" value="CAB57606.1"/>
    <property type="molecule type" value="Genomic_DNA"/>
</dbReference>
<dbReference type="EMBL" id="AE006641">
    <property type="protein sequence ID" value="AAK40998.1"/>
    <property type="molecule type" value="Genomic_DNA"/>
</dbReference>
<dbReference type="PIR" id="G90217">
    <property type="entry name" value="G90217"/>
</dbReference>
<dbReference type="SMR" id="Q9UX86"/>
<dbReference type="FunCoup" id="Q9UX86">
    <property type="interactions" value="211"/>
</dbReference>
<dbReference type="STRING" id="273057.SSO0697"/>
<dbReference type="PaxDb" id="273057-SSO0697"/>
<dbReference type="EnsemblBacteria" id="AAK40998">
    <property type="protein sequence ID" value="AAK40998"/>
    <property type="gene ID" value="SSO0697"/>
</dbReference>
<dbReference type="KEGG" id="sso:SSO0697"/>
<dbReference type="PATRIC" id="fig|273057.12.peg.697"/>
<dbReference type="eggNOG" id="arCOG04086">
    <property type="taxonomic scope" value="Archaea"/>
</dbReference>
<dbReference type="HOGENOM" id="CLU_055156_6_0_2"/>
<dbReference type="InParanoid" id="Q9UX86"/>
<dbReference type="PhylomeDB" id="Q9UX86"/>
<dbReference type="Proteomes" id="UP000001974">
    <property type="component" value="Chromosome"/>
</dbReference>
<dbReference type="GO" id="GO:0022625">
    <property type="term" value="C:cytosolic large ribosomal subunit"/>
    <property type="evidence" value="ECO:0000318"/>
    <property type="project" value="GO_Central"/>
</dbReference>
<dbReference type="GO" id="GO:0003723">
    <property type="term" value="F:RNA binding"/>
    <property type="evidence" value="ECO:0000318"/>
    <property type="project" value="GO_Central"/>
</dbReference>
<dbReference type="GO" id="GO:0003735">
    <property type="term" value="F:structural constituent of ribosome"/>
    <property type="evidence" value="ECO:0000318"/>
    <property type="project" value="GO_Central"/>
</dbReference>
<dbReference type="GO" id="GO:0000463">
    <property type="term" value="P:maturation of LSU-rRNA from tricistronic rRNA transcript (SSU-rRNA, 5.8S rRNA, LSU-rRNA)"/>
    <property type="evidence" value="ECO:0000318"/>
    <property type="project" value="GO_Central"/>
</dbReference>
<dbReference type="GO" id="GO:0006412">
    <property type="term" value="P:translation"/>
    <property type="evidence" value="ECO:0007669"/>
    <property type="project" value="UniProtKB-UniRule"/>
</dbReference>
<dbReference type="CDD" id="cd01657">
    <property type="entry name" value="Ribosomal_L7_archeal_euk"/>
    <property type="match status" value="1"/>
</dbReference>
<dbReference type="Gene3D" id="1.10.15.30">
    <property type="match status" value="1"/>
</dbReference>
<dbReference type="Gene3D" id="3.30.1390.20">
    <property type="entry name" value="Ribosomal protein L30, ferredoxin-like fold domain"/>
    <property type="match status" value="1"/>
</dbReference>
<dbReference type="HAMAP" id="MF_01371_A">
    <property type="entry name" value="Ribosomal_uL30_A"/>
    <property type="match status" value="1"/>
</dbReference>
<dbReference type="InterPro" id="IPR036919">
    <property type="entry name" value="Ribo_uL30_ferredoxin-like_sf"/>
</dbReference>
<dbReference type="InterPro" id="IPR039699">
    <property type="entry name" value="Ribosomal_uL30"/>
</dbReference>
<dbReference type="InterPro" id="IPR005997">
    <property type="entry name" value="Ribosomal_uL30_arc"/>
</dbReference>
<dbReference type="InterPro" id="IPR035808">
    <property type="entry name" value="Ribosomal_uL30_euk_arc"/>
</dbReference>
<dbReference type="InterPro" id="IPR016082">
    <property type="entry name" value="Ribosomal_uL30_ferredoxin-like"/>
</dbReference>
<dbReference type="NCBIfam" id="NF004711">
    <property type="entry name" value="PRK06049.1"/>
    <property type="match status" value="1"/>
</dbReference>
<dbReference type="NCBIfam" id="TIGR01309">
    <property type="entry name" value="uL30_arch"/>
    <property type="match status" value="1"/>
</dbReference>
<dbReference type="PANTHER" id="PTHR11524">
    <property type="entry name" value="60S RIBOSOMAL PROTEIN L7"/>
    <property type="match status" value="1"/>
</dbReference>
<dbReference type="PANTHER" id="PTHR11524:SF16">
    <property type="entry name" value="LARGE RIBOSOMAL SUBUNIT PROTEIN UL30"/>
    <property type="match status" value="1"/>
</dbReference>
<dbReference type="Pfam" id="PF00327">
    <property type="entry name" value="Ribosomal_L30"/>
    <property type="match status" value="1"/>
</dbReference>
<dbReference type="SUPFAM" id="SSF55129">
    <property type="entry name" value="Ribosomal protein L30p/L7e"/>
    <property type="match status" value="1"/>
</dbReference>
<accession>Q9UX86</accession>
<protein>
    <recommendedName>
        <fullName evidence="1">Large ribosomal subunit protein uL30</fullName>
    </recommendedName>
    <alternativeName>
        <fullName evidence="2">50S ribosomal protein L30</fullName>
    </alternativeName>
</protein>
<feature type="chain" id="PRO_0000104631" description="Large ribosomal subunit protein uL30">
    <location>
        <begin position="1"/>
        <end position="158"/>
    </location>
</feature>
<evidence type="ECO:0000255" key="1">
    <source>
        <dbReference type="HAMAP-Rule" id="MF_01371"/>
    </source>
</evidence>
<evidence type="ECO:0000305" key="2"/>
<sequence length="158" mass="18596">MVELLGIIRIRGWAKAPWYINETLNMLRLRYNFNTMVYPKTSQILGMLNKVSPYITWGEIDPDTLKLLIINRLETVKGDKVSDSYVKEVLKIENIDAMVKQLYEGKIYLHKLDEYFKLPIRLHPPRGGFKGSVKRPYKNKGEFGYRGDKINELMRRMV</sequence>
<organism>
    <name type="scientific">Saccharolobus solfataricus (strain ATCC 35092 / DSM 1617 / JCM 11322 / P2)</name>
    <name type="common">Sulfolobus solfataricus</name>
    <dbReference type="NCBI Taxonomy" id="273057"/>
    <lineage>
        <taxon>Archaea</taxon>
        <taxon>Thermoproteota</taxon>
        <taxon>Thermoprotei</taxon>
        <taxon>Sulfolobales</taxon>
        <taxon>Sulfolobaceae</taxon>
        <taxon>Saccharolobus</taxon>
    </lineage>
</organism>
<keyword id="KW-1185">Reference proteome</keyword>
<keyword id="KW-0687">Ribonucleoprotein</keyword>
<keyword id="KW-0689">Ribosomal protein</keyword>
<comment type="subunit">
    <text evidence="1">Part of the 50S ribosomal subunit.</text>
</comment>
<comment type="similarity">
    <text evidence="1">Belongs to the universal ribosomal protein uL30 family.</text>
</comment>
<proteinExistence type="inferred from homology"/>
<reference key="1">
    <citation type="journal article" date="2000" name="Genome">
        <title>Gene content and organization of a 281-kbp contig from the genome of the extremely thermophilic archaeon, Sulfolobus solfataricus P2.</title>
        <authorList>
            <person name="Charlebois R.L."/>
            <person name="Singh R.K."/>
            <person name="Chan-Weiher C.C.-Y."/>
            <person name="Allard G."/>
            <person name="Chow C."/>
            <person name="Confalonieri F."/>
            <person name="Curtis B."/>
            <person name="Duguet M."/>
            <person name="Erauso G."/>
            <person name="Faguy D."/>
            <person name="Gaasterland T."/>
            <person name="Garrett R.A."/>
            <person name="Gordon P."/>
            <person name="Jeffries A.C."/>
            <person name="Kozera C."/>
            <person name="Kushwaha N."/>
            <person name="Lafleur E."/>
            <person name="Medina N."/>
            <person name="Peng X."/>
            <person name="Penny S.L."/>
            <person name="She Q."/>
            <person name="St Jean A."/>
            <person name="van der Oost J."/>
            <person name="Young F."/>
            <person name="Zivanovic Y."/>
            <person name="Doolittle W.F."/>
            <person name="Ragan M.A."/>
            <person name="Sensen C.W."/>
        </authorList>
    </citation>
    <scope>NUCLEOTIDE SEQUENCE [LARGE SCALE GENOMIC DNA]</scope>
    <source>
        <strain>ATCC 35092 / DSM 1617 / JCM 11322 / P2</strain>
    </source>
</reference>
<reference key="2">
    <citation type="journal article" date="2001" name="Proc. Natl. Acad. Sci. U.S.A.">
        <title>The complete genome of the crenarchaeon Sulfolobus solfataricus P2.</title>
        <authorList>
            <person name="She Q."/>
            <person name="Singh R.K."/>
            <person name="Confalonieri F."/>
            <person name="Zivanovic Y."/>
            <person name="Allard G."/>
            <person name="Awayez M.J."/>
            <person name="Chan-Weiher C.C.-Y."/>
            <person name="Clausen I.G."/>
            <person name="Curtis B.A."/>
            <person name="De Moors A."/>
            <person name="Erauso G."/>
            <person name="Fletcher C."/>
            <person name="Gordon P.M.K."/>
            <person name="Heikamp-de Jong I."/>
            <person name="Jeffries A.C."/>
            <person name="Kozera C.J."/>
            <person name="Medina N."/>
            <person name="Peng X."/>
            <person name="Thi-Ngoc H.P."/>
            <person name="Redder P."/>
            <person name="Schenk M.E."/>
            <person name="Theriault C."/>
            <person name="Tolstrup N."/>
            <person name="Charlebois R.L."/>
            <person name="Doolittle W.F."/>
            <person name="Duguet M."/>
            <person name="Gaasterland T."/>
            <person name="Garrett R.A."/>
            <person name="Ragan M.A."/>
            <person name="Sensen C.W."/>
            <person name="Van der Oost J."/>
        </authorList>
    </citation>
    <scope>NUCLEOTIDE SEQUENCE [LARGE SCALE GENOMIC DNA]</scope>
    <source>
        <strain>ATCC 35092 / DSM 1617 / JCM 11322 / P2</strain>
    </source>
</reference>
<name>RL30_SACS2</name>